<evidence type="ECO:0000250" key="1"/>
<evidence type="ECO:0000255" key="2">
    <source>
        <dbReference type="HAMAP-Rule" id="MF_00480"/>
    </source>
</evidence>
<evidence type="ECO:0000305" key="3"/>
<sequence>MSRRGTAEKKKAKSDPIYRNRLVNMLVNRILKHGKKSLAYQIMYRAVKTIQQNTEKNPLSVLRQAIRGVTPDLTVKARRVSGSTHQVPIEIRSTQGKALAVRWLLAASRKRPGRDMAFKLSSELVDAAKGRGDAIRKKEETHRMAEANRAFAHFR</sequence>
<accession>A8W3M5</accession>
<organism>
    <name type="scientific">Cuscuta obtusiflora</name>
    <name type="common">Peruvian dodder</name>
    <dbReference type="NCBI Taxonomy" id="437280"/>
    <lineage>
        <taxon>Eukaryota</taxon>
        <taxon>Viridiplantae</taxon>
        <taxon>Streptophyta</taxon>
        <taxon>Embryophyta</taxon>
        <taxon>Tracheophyta</taxon>
        <taxon>Spermatophyta</taxon>
        <taxon>Magnoliopsida</taxon>
        <taxon>eudicotyledons</taxon>
        <taxon>Gunneridae</taxon>
        <taxon>Pentapetalae</taxon>
        <taxon>asterids</taxon>
        <taxon>lamiids</taxon>
        <taxon>Solanales</taxon>
        <taxon>Convolvulaceae</taxon>
        <taxon>Cuscuteae</taxon>
        <taxon>Cuscuta</taxon>
        <taxon>Cuscuta subgen. Grammica</taxon>
        <taxon>Cuscuta sect. Cleistogrammica</taxon>
    </lineage>
</organism>
<geneLocation type="plastid"/>
<keyword id="KW-0934">Plastid</keyword>
<keyword id="KW-0687">Ribonucleoprotein</keyword>
<keyword id="KW-0689">Ribosomal protein</keyword>
<keyword id="KW-0694">RNA-binding</keyword>
<keyword id="KW-0699">rRNA-binding</keyword>
<comment type="function">
    <text evidence="1">One of the primary rRNA binding proteins, it binds directly to 16S rRNA where it nucleates assembly of the head domain of the 30S subunit.</text>
</comment>
<comment type="subunit">
    <text evidence="1">Part of the 30S ribosomal subunit.</text>
</comment>
<comment type="subcellular location">
    <subcellularLocation>
        <location>Plastid</location>
    </subcellularLocation>
</comment>
<comment type="similarity">
    <text evidence="3">Belongs to the universal ribosomal protein uS7 family.</text>
</comment>
<comment type="caution">
    <text evidence="3">Only inflorescences, fruits, starved seedlings and stressed stem tips are green in this organism.</text>
</comment>
<proteinExistence type="inferred from homology"/>
<name>RR7_CUSOB</name>
<reference key="1">
    <citation type="journal article" date="2007" name="BMC Plant Biol.">
        <title>Complete plastid genome sequences suggest strong selection for retention of photosynthetic genes in the parasitic plant genus Cuscuta.</title>
        <authorList>
            <person name="McNeal J.R."/>
            <person name="Kuehl J.V."/>
            <person name="Boore J.L."/>
            <person name="dePamphilis C.W."/>
        </authorList>
    </citation>
    <scope>NUCLEOTIDE SEQUENCE [LARGE SCALE GENOMIC DNA]</scope>
</reference>
<dbReference type="EMBL" id="EU189133">
    <property type="protein sequence ID" value="ABW20600.1"/>
    <property type="molecule type" value="Genomic_DNA"/>
</dbReference>
<dbReference type="EMBL" id="EU189133">
    <property type="protein sequence ID" value="ABW20606.1"/>
    <property type="molecule type" value="Genomic_DNA"/>
</dbReference>
<dbReference type="SMR" id="A8W3M5"/>
<dbReference type="GO" id="GO:0009536">
    <property type="term" value="C:plastid"/>
    <property type="evidence" value="ECO:0007669"/>
    <property type="project" value="UniProtKB-SubCell"/>
</dbReference>
<dbReference type="GO" id="GO:0015935">
    <property type="term" value="C:small ribosomal subunit"/>
    <property type="evidence" value="ECO:0007669"/>
    <property type="project" value="InterPro"/>
</dbReference>
<dbReference type="GO" id="GO:0019843">
    <property type="term" value="F:rRNA binding"/>
    <property type="evidence" value="ECO:0007669"/>
    <property type="project" value="UniProtKB-KW"/>
</dbReference>
<dbReference type="GO" id="GO:0003735">
    <property type="term" value="F:structural constituent of ribosome"/>
    <property type="evidence" value="ECO:0007669"/>
    <property type="project" value="InterPro"/>
</dbReference>
<dbReference type="GO" id="GO:0006412">
    <property type="term" value="P:translation"/>
    <property type="evidence" value="ECO:0007669"/>
    <property type="project" value="InterPro"/>
</dbReference>
<dbReference type="CDD" id="cd14871">
    <property type="entry name" value="uS7_Chloroplast"/>
    <property type="match status" value="1"/>
</dbReference>
<dbReference type="FunFam" id="1.10.455.10:FF:000001">
    <property type="entry name" value="30S ribosomal protein S7"/>
    <property type="match status" value="1"/>
</dbReference>
<dbReference type="Gene3D" id="1.10.455.10">
    <property type="entry name" value="Ribosomal protein S7 domain"/>
    <property type="match status" value="1"/>
</dbReference>
<dbReference type="HAMAP" id="MF_00480_B">
    <property type="entry name" value="Ribosomal_uS7_B"/>
    <property type="match status" value="1"/>
</dbReference>
<dbReference type="InterPro" id="IPR000235">
    <property type="entry name" value="Ribosomal_uS7"/>
</dbReference>
<dbReference type="InterPro" id="IPR005717">
    <property type="entry name" value="Ribosomal_uS7_bac/org-type"/>
</dbReference>
<dbReference type="InterPro" id="IPR020606">
    <property type="entry name" value="Ribosomal_uS7_CS"/>
</dbReference>
<dbReference type="InterPro" id="IPR023798">
    <property type="entry name" value="Ribosomal_uS7_dom"/>
</dbReference>
<dbReference type="InterPro" id="IPR036823">
    <property type="entry name" value="Ribosomal_uS7_dom_sf"/>
</dbReference>
<dbReference type="NCBIfam" id="TIGR01029">
    <property type="entry name" value="rpsG_bact"/>
    <property type="match status" value="1"/>
</dbReference>
<dbReference type="PANTHER" id="PTHR11205">
    <property type="entry name" value="RIBOSOMAL PROTEIN S7"/>
    <property type="match status" value="1"/>
</dbReference>
<dbReference type="Pfam" id="PF00177">
    <property type="entry name" value="Ribosomal_S7"/>
    <property type="match status" value="1"/>
</dbReference>
<dbReference type="PIRSF" id="PIRSF002122">
    <property type="entry name" value="RPS7p_RPS7a_RPS5e_RPS7o"/>
    <property type="match status" value="1"/>
</dbReference>
<dbReference type="SUPFAM" id="SSF47973">
    <property type="entry name" value="Ribosomal protein S7"/>
    <property type="match status" value="1"/>
</dbReference>
<dbReference type="PROSITE" id="PS00052">
    <property type="entry name" value="RIBOSOMAL_S7"/>
    <property type="match status" value="1"/>
</dbReference>
<feature type="chain" id="PRO_0000344335" description="Small ribosomal subunit protein uS7cz/uS7cy">
    <location>
        <begin position="1"/>
        <end position="155"/>
    </location>
</feature>
<gene>
    <name type="primary">rps7-A</name>
</gene>
<gene>
    <name type="primary">rps7-B</name>
</gene>
<protein>
    <recommendedName>
        <fullName evidence="2">Small ribosomal subunit protein uS7cz/uS7cy</fullName>
    </recommendedName>
    <alternativeName>
        <fullName>30S ribosomal protein S7, plastid</fullName>
    </alternativeName>
</protein>